<proteinExistence type="inferred from homology"/>
<sequence length="111" mass="12487">MAVKIRLARGGAKKRPFYRVVVANATAPRDGDFLEKVGTYNPMLASDNSERVVLKKDRIEYWLGTGAKPTERVAKFIEQAGVTLPEKVKKEMEVKAKNRKVRPSKKEAKEA</sequence>
<accession>Q4UJQ3</accession>
<organism>
    <name type="scientific">Rickettsia felis (strain ATCC VR-1525 / URRWXCal2)</name>
    <name type="common">Rickettsia azadi</name>
    <dbReference type="NCBI Taxonomy" id="315456"/>
    <lineage>
        <taxon>Bacteria</taxon>
        <taxon>Pseudomonadati</taxon>
        <taxon>Pseudomonadota</taxon>
        <taxon>Alphaproteobacteria</taxon>
        <taxon>Rickettsiales</taxon>
        <taxon>Rickettsiaceae</taxon>
        <taxon>Rickettsieae</taxon>
        <taxon>Rickettsia</taxon>
        <taxon>spotted fever group</taxon>
    </lineage>
</organism>
<name>RS16_RICFE</name>
<protein>
    <recommendedName>
        <fullName evidence="1">Small ribosomal subunit protein bS16</fullName>
    </recommendedName>
    <alternativeName>
        <fullName evidence="2">30S ribosomal protein S16</fullName>
    </alternativeName>
</protein>
<evidence type="ECO:0000255" key="1">
    <source>
        <dbReference type="HAMAP-Rule" id="MF_00385"/>
    </source>
</evidence>
<evidence type="ECO:0000305" key="2"/>
<dbReference type="EMBL" id="CP000053">
    <property type="protein sequence ID" value="AAY62236.1"/>
    <property type="molecule type" value="Genomic_DNA"/>
</dbReference>
<dbReference type="SMR" id="Q4UJQ3"/>
<dbReference type="STRING" id="315456.RF_1385"/>
<dbReference type="KEGG" id="rfe:RF_1385"/>
<dbReference type="eggNOG" id="COG0228">
    <property type="taxonomic scope" value="Bacteria"/>
</dbReference>
<dbReference type="HOGENOM" id="CLU_100590_3_1_5"/>
<dbReference type="OrthoDB" id="9807878at2"/>
<dbReference type="Proteomes" id="UP000008548">
    <property type="component" value="Chromosome"/>
</dbReference>
<dbReference type="GO" id="GO:0005737">
    <property type="term" value="C:cytoplasm"/>
    <property type="evidence" value="ECO:0007669"/>
    <property type="project" value="UniProtKB-ARBA"/>
</dbReference>
<dbReference type="GO" id="GO:0015935">
    <property type="term" value="C:small ribosomal subunit"/>
    <property type="evidence" value="ECO:0007669"/>
    <property type="project" value="TreeGrafter"/>
</dbReference>
<dbReference type="GO" id="GO:0003735">
    <property type="term" value="F:structural constituent of ribosome"/>
    <property type="evidence" value="ECO:0007669"/>
    <property type="project" value="InterPro"/>
</dbReference>
<dbReference type="GO" id="GO:0006412">
    <property type="term" value="P:translation"/>
    <property type="evidence" value="ECO:0007669"/>
    <property type="project" value="UniProtKB-UniRule"/>
</dbReference>
<dbReference type="Gene3D" id="3.30.1320.10">
    <property type="match status" value="1"/>
</dbReference>
<dbReference type="HAMAP" id="MF_00385">
    <property type="entry name" value="Ribosomal_bS16"/>
    <property type="match status" value="1"/>
</dbReference>
<dbReference type="InterPro" id="IPR000307">
    <property type="entry name" value="Ribosomal_bS16"/>
</dbReference>
<dbReference type="InterPro" id="IPR020592">
    <property type="entry name" value="Ribosomal_bS16_CS"/>
</dbReference>
<dbReference type="InterPro" id="IPR023803">
    <property type="entry name" value="Ribosomal_bS16_dom_sf"/>
</dbReference>
<dbReference type="NCBIfam" id="TIGR00002">
    <property type="entry name" value="S16"/>
    <property type="match status" value="1"/>
</dbReference>
<dbReference type="PANTHER" id="PTHR12919">
    <property type="entry name" value="30S RIBOSOMAL PROTEIN S16"/>
    <property type="match status" value="1"/>
</dbReference>
<dbReference type="PANTHER" id="PTHR12919:SF20">
    <property type="entry name" value="SMALL RIBOSOMAL SUBUNIT PROTEIN BS16M"/>
    <property type="match status" value="1"/>
</dbReference>
<dbReference type="Pfam" id="PF00886">
    <property type="entry name" value="Ribosomal_S16"/>
    <property type="match status" value="1"/>
</dbReference>
<dbReference type="SUPFAM" id="SSF54565">
    <property type="entry name" value="Ribosomal protein S16"/>
    <property type="match status" value="1"/>
</dbReference>
<dbReference type="PROSITE" id="PS00732">
    <property type="entry name" value="RIBOSOMAL_S16"/>
    <property type="match status" value="1"/>
</dbReference>
<comment type="similarity">
    <text evidence="1">Belongs to the bacterial ribosomal protein bS16 family.</text>
</comment>
<gene>
    <name evidence="1" type="primary">rpsP</name>
    <name type="ordered locus">RF_1385</name>
</gene>
<reference key="1">
    <citation type="journal article" date="2005" name="PLoS Biol.">
        <title>The genome sequence of Rickettsia felis identifies the first putative conjugative plasmid in an obligate intracellular parasite.</title>
        <authorList>
            <person name="Ogata H."/>
            <person name="Renesto P."/>
            <person name="Audic S."/>
            <person name="Robert C."/>
            <person name="Blanc G."/>
            <person name="Fournier P.-E."/>
            <person name="Parinello H."/>
            <person name="Claverie J.-M."/>
            <person name="Raoult D."/>
        </authorList>
    </citation>
    <scope>NUCLEOTIDE SEQUENCE [LARGE SCALE GENOMIC DNA]</scope>
    <source>
        <strain>ATCC VR-1525 / URRWXCal2</strain>
    </source>
</reference>
<keyword id="KW-0687">Ribonucleoprotein</keyword>
<keyword id="KW-0689">Ribosomal protein</keyword>
<feature type="chain" id="PRO_0000243863" description="Small ribosomal subunit protein bS16">
    <location>
        <begin position="1"/>
        <end position="111"/>
    </location>
</feature>